<accession>A6ZRN4</accession>
<keyword id="KW-0007">Acetylation</keyword>
<keyword id="KW-0143">Chaperone</keyword>
<keyword id="KW-0158">Chromosome</keyword>
<keyword id="KW-0238">DNA-binding</keyword>
<keyword id="KW-0539">Nucleus</keyword>
<keyword id="KW-0597">Phosphoprotein</keyword>
<keyword id="KW-0677">Repeat</keyword>
<keyword id="KW-0804">Transcription</keyword>
<keyword id="KW-0805">Transcription regulation</keyword>
<keyword id="KW-0815">Transposition</keyword>
<reference key="1">
    <citation type="journal article" date="2007" name="Proc. Natl. Acad. Sci. U.S.A.">
        <title>Genome sequencing and comparative analysis of Saccharomyces cerevisiae strain YJM789.</title>
        <authorList>
            <person name="Wei W."/>
            <person name="McCusker J.H."/>
            <person name="Hyman R.W."/>
            <person name="Jones T."/>
            <person name="Ning Y."/>
            <person name="Cao Z."/>
            <person name="Gu Z."/>
            <person name="Bruno D."/>
            <person name="Miranda M."/>
            <person name="Nguyen M."/>
            <person name="Wilhelmy J."/>
            <person name="Komp C."/>
            <person name="Tamse R."/>
            <person name="Wang X."/>
            <person name="Jia P."/>
            <person name="Luedi P."/>
            <person name="Oefner P.J."/>
            <person name="David L."/>
            <person name="Dietrich F.S."/>
            <person name="Li Y."/>
            <person name="Davis R.W."/>
            <person name="Steinmetz L.M."/>
        </authorList>
    </citation>
    <scope>NUCLEOTIDE SEQUENCE [LARGE SCALE GENOMIC DNA]</scope>
    <source>
        <strain>YJM789</strain>
    </source>
</reference>
<protein>
    <recommendedName>
        <fullName>Histone chaperone RTT106</fullName>
    </recommendedName>
    <alternativeName>
        <fullName>Regulator of Ty1 transposition protein 106</fullName>
    </alternativeName>
</protein>
<comment type="function">
    <text evidence="1">Histones H3 and H4 chaperone involved in the nucleosome formation and heterochromatin silencing. Required for the deposition of H3K56ac-carrying H3-H4 complex onto newly-replicated DNA. Plays a role in the transcriptional regulation of the cell-cycle dependent histone genes by directly recruiting the SWI/SNF and RSC chromatin remodeling complexes to the histone genes in a cell cycle dependent manner. In cooperation with HIR and ASF1, creates a repressive structure at the core histone gene promoter and contributes to their repression outside of S phase. Involved in regulation of Ty1 transposition (By similarity).</text>
</comment>
<comment type="subunit">
    <text evidence="1">Interacts with the SWI/SNF, RSC and HIR complexes. Interacts with RLF2, SIR4, YTA7 and histones H3 and H4.</text>
</comment>
<comment type="subcellular location">
    <subcellularLocation>
        <location evidence="1">Nucleus</location>
    </subcellularLocation>
    <subcellularLocation>
        <location evidence="1">Chromosome</location>
    </subcellularLocation>
</comment>
<comment type="domain">
    <text evidence="1">The N-ter domain (residues 1-67) homodimerizes and interacts with H3-H4 independently of acetylation while the double pleckstrin-homology (PH) domain (residues 68-301) binds the 'Lys-56'-containing region of H3.</text>
</comment>
<comment type="similarity">
    <text evidence="4">Belongs to the RTT106 family.</text>
</comment>
<name>RT106_YEAS7</name>
<proteinExistence type="inferred from homology"/>
<gene>
    <name type="primary">RTT106</name>
    <name type="ORF">SCY_4595</name>
</gene>
<dbReference type="EMBL" id="AAFW02000067">
    <property type="protein sequence ID" value="EDN62616.1"/>
    <property type="molecule type" value="Genomic_DNA"/>
</dbReference>
<dbReference type="SMR" id="A6ZRN4"/>
<dbReference type="HOGENOM" id="CLU_040939_1_0_1"/>
<dbReference type="OrthoDB" id="37797at4893"/>
<dbReference type="Proteomes" id="UP000007060">
    <property type="component" value="Unassembled WGS sequence"/>
</dbReference>
<dbReference type="GO" id="GO:0005694">
    <property type="term" value="C:chromosome"/>
    <property type="evidence" value="ECO:0007669"/>
    <property type="project" value="UniProtKB-SubCell"/>
</dbReference>
<dbReference type="GO" id="GO:0005634">
    <property type="term" value="C:nucleus"/>
    <property type="evidence" value="ECO:0007669"/>
    <property type="project" value="UniProtKB-SubCell"/>
</dbReference>
<dbReference type="GO" id="GO:0003677">
    <property type="term" value="F:DNA binding"/>
    <property type="evidence" value="ECO:0007669"/>
    <property type="project" value="UniProtKB-KW"/>
</dbReference>
<dbReference type="GO" id="GO:0042393">
    <property type="term" value="F:histone binding"/>
    <property type="evidence" value="ECO:0007669"/>
    <property type="project" value="TreeGrafter"/>
</dbReference>
<dbReference type="GO" id="GO:0031491">
    <property type="term" value="F:nucleosome binding"/>
    <property type="evidence" value="ECO:0007669"/>
    <property type="project" value="TreeGrafter"/>
</dbReference>
<dbReference type="GO" id="GO:0032196">
    <property type="term" value="P:transposition"/>
    <property type="evidence" value="ECO:0007669"/>
    <property type="project" value="UniProtKB-KW"/>
</dbReference>
<dbReference type="CDD" id="cd13303">
    <property type="entry name" value="PH1-like_Rtt106"/>
    <property type="match status" value="1"/>
</dbReference>
<dbReference type="CDD" id="cd13304">
    <property type="entry name" value="PH2-like_Rtt106"/>
    <property type="match status" value="1"/>
</dbReference>
<dbReference type="CDD" id="cd11604">
    <property type="entry name" value="RTT106_N"/>
    <property type="match status" value="1"/>
</dbReference>
<dbReference type="Gene3D" id="2.30.29.120">
    <property type="match status" value="1"/>
</dbReference>
<dbReference type="Gene3D" id="2.30.29.30">
    <property type="entry name" value="Pleckstrin-homology domain (PH domain)/Phosphotyrosine-binding domain (PTB)"/>
    <property type="match status" value="1"/>
</dbReference>
<dbReference type="Gene3D" id="6.10.10.70">
    <property type="entry name" value="RTT106-like"/>
    <property type="match status" value="1"/>
</dbReference>
<dbReference type="InterPro" id="IPR011993">
    <property type="entry name" value="PH-like_dom_sf"/>
</dbReference>
<dbReference type="InterPro" id="IPR013719">
    <property type="entry name" value="RTT106/SPT16-like_middle_dom"/>
</dbReference>
<dbReference type="InterPro" id="IPR050454">
    <property type="entry name" value="RTT106/SSRP1_HistChap/FACT"/>
</dbReference>
<dbReference type="InterPro" id="IPR040993">
    <property type="entry name" value="Rtt106_N"/>
</dbReference>
<dbReference type="InterPro" id="IPR044891">
    <property type="entry name" value="Rtt106_N_sf"/>
</dbReference>
<dbReference type="InterPro" id="IPR040770">
    <property type="entry name" value="Rtt106_PH"/>
</dbReference>
<dbReference type="PANTHER" id="PTHR45849">
    <property type="entry name" value="FACT COMPLEX SUBUNIT SSRP1"/>
    <property type="match status" value="1"/>
</dbReference>
<dbReference type="PANTHER" id="PTHR45849:SF3">
    <property type="entry name" value="HISTONE CHAPERONE RTT106"/>
    <property type="match status" value="1"/>
</dbReference>
<dbReference type="Pfam" id="PF18469">
    <property type="entry name" value="PH_18"/>
    <property type="match status" value="1"/>
</dbReference>
<dbReference type="Pfam" id="PF18215">
    <property type="entry name" value="Rtt106_N"/>
    <property type="match status" value="1"/>
</dbReference>
<dbReference type="Pfam" id="PF08512">
    <property type="entry name" value="Rttp106-like_middle"/>
    <property type="match status" value="1"/>
</dbReference>
<dbReference type="SMART" id="SM01287">
    <property type="entry name" value="Rtt106"/>
    <property type="match status" value="1"/>
</dbReference>
<dbReference type="SUPFAM" id="SSF50729">
    <property type="entry name" value="PH domain-like"/>
    <property type="match status" value="1"/>
</dbReference>
<feature type="initiator methionine" description="Removed" evidence="2">
    <location>
        <position position="1"/>
    </location>
</feature>
<feature type="chain" id="PRO_0000320502" description="Histone chaperone RTT106">
    <location>
        <begin position="2"/>
        <end position="455"/>
    </location>
</feature>
<feature type="domain" description="PH 1">
    <location>
        <begin position="68"/>
        <end position="200"/>
    </location>
</feature>
<feature type="domain" description="PH 2">
    <location>
        <begin position="217"/>
        <end position="301"/>
    </location>
</feature>
<feature type="region of interest" description="Dimeric region" evidence="1">
    <location>
        <begin position="2"/>
        <end position="67"/>
    </location>
</feature>
<feature type="region of interest" description="Double PH domain" evidence="1">
    <location>
        <begin position="68"/>
        <end position="301"/>
    </location>
</feature>
<feature type="region of interest" description="Disordered" evidence="3">
    <location>
        <begin position="305"/>
        <end position="455"/>
    </location>
</feature>
<feature type="compositionally biased region" description="Basic and acidic residues" evidence="3">
    <location>
        <begin position="305"/>
        <end position="314"/>
    </location>
</feature>
<feature type="compositionally biased region" description="Polar residues" evidence="3">
    <location>
        <begin position="319"/>
        <end position="339"/>
    </location>
</feature>
<feature type="compositionally biased region" description="Acidic residues" evidence="3">
    <location>
        <begin position="350"/>
        <end position="366"/>
    </location>
</feature>
<feature type="compositionally biased region" description="Acidic residues" evidence="3">
    <location>
        <begin position="376"/>
        <end position="395"/>
    </location>
</feature>
<feature type="compositionally biased region" description="Polar residues" evidence="3">
    <location>
        <begin position="402"/>
        <end position="418"/>
    </location>
</feature>
<feature type="compositionally biased region" description="Basic and acidic residues" evidence="3">
    <location>
        <begin position="420"/>
        <end position="429"/>
    </location>
</feature>
<feature type="compositionally biased region" description="Acidic residues" evidence="3">
    <location>
        <begin position="430"/>
        <end position="455"/>
    </location>
</feature>
<feature type="modified residue" description="N-acetylserine" evidence="2">
    <location>
        <position position="2"/>
    </location>
</feature>
<feature type="modified residue" description="Phosphoserine" evidence="2">
    <location>
        <position position="408"/>
    </location>
</feature>
<feature type="modified residue" description="Phosphoserine" evidence="2">
    <location>
        <position position="411"/>
    </location>
</feature>
<feature type="modified residue" description="Phosphoserine" evidence="2">
    <location>
        <position position="450"/>
    </location>
</feature>
<evidence type="ECO:0000250" key="1"/>
<evidence type="ECO:0000250" key="2">
    <source>
        <dbReference type="UniProtKB" id="P40161"/>
    </source>
</evidence>
<evidence type="ECO:0000256" key="3">
    <source>
        <dbReference type="SAM" id="MobiDB-lite"/>
    </source>
</evidence>
<evidence type="ECO:0000305" key="4"/>
<sequence length="455" mass="51563">MSKLFLDELPESLSRKIGTVVRVLPSSLEIFEELYKYALNENSNDRSGRHKKPRIDVSSDLLKTDEISETNTIFKLEGVSVLSPLRKKLDLVFYLSNVDGSPVITLLKGNDRELSIYQLNKNIKMASFLPVPEKPNLIYLFMTYTSCEDNKFSEPVVMTLNKENTLNQFKNLGLLDSNVTDFEKCVEYIRKQAILTGFKISNPFVNSTLVDTDAEKINSFHLQCHRGTKEGTLYFLPDHIIFGFKKPILLFDASDIESITYSSITRLTFNASLVTKDGEKYEFSMIDQTEYAKIDDYVKRKQMKDKSMSEELKAKSKSKGQATDGTADQPSILQEATRQMQDEKKAGVFSDDDEENDQNFEAESDLSDGSGQESSDGAEDGEEAEEDDEEDDEEEDKKGQSALNRDNSFASINGQPEQELQYKEFKEPLELEDIPIEIGNDDDEDDEDGSGVEYD</sequence>
<organism>
    <name type="scientific">Saccharomyces cerevisiae (strain YJM789)</name>
    <name type="common">Baker's yeast</name>
    <dbReference type="NCBI Taxonomy" id="307796"/>
    <lineage>
        <taxon>Eukaryota</taxon>
        <taxon>Fungi</taxon>
        <taxon>Dikarya</taxon>
        <taxon>Ascomycota</taxon>
        <taxon>Saccharomycotina</taxon>
        <taxon>Saccharomycetes</taxon>
        <taxon>Saccharomycetales</taxon>
        <taxon>Saccharomycetaceae</taxon>
        <taxon>Saccharomyces</taxon>
    </lineage>
</organism>